<accession>O69890</accession>
<feature type="chain" id="PRO_0000167380" description="UPF0102 protein SCO5602">
    <location>
        <begin position="1"/>
        <end position="130"/>
    </location>
</feature>
<gene>
    <name type="ordered locus">SCO5602</name>
    <name type="ORF">SC2E1.19</name>
</gene>
<evidence type="ECO:0000305" key="1"/>
<reference key="1">
    <citation type="journal article" date="2002" name="Nature">
        <title>Complete genome sequence of the model actinomycete Streptomyces coelicolor A3(2).</title>
        <authorList>
            <person name="Bentley S.D."/>
            <person name="Chater K.F."/>
            <person name="Cerdeno-Tarraga A.-M."/>
            <person name="Challis G.L."/>
            <person name="Thomson N.R."/>
            <person name="James K.D."/>
            <person name="Harris D.E."/>
            <person name="Quail M.A."/>
            <person name="Kieser H."/>
            <person name="Harper D."/>
            <person name="Bateman A."/>
            <person name="Brown S."/>
            <person name="Chandra G."/>
            <person name="Chen C.W."/>
            <person name="Collins M."/>
            <person name="Cronin A."/>
            <person name="Fraser A."/>
            <person name="Goble A."/>
            <person name="Hidalgo J."/>
            <person name="Hornsby T."/>
            <person name="Howarth S."/>
            <person name="Huang C.-H."/>
            <person name="Kieser T."/>
            <person name="Larke L."/>
            <person name="Murphy L.D."/>
            <person name="Oliver K."/>
            <person name="O'Neil S."/>
            <person name="Rabbinowitsch E."/>
            <person name="Rajandream M.A."/>
            <person name="Rutherford K.M."/>
            <person name="Rutter S."/>
            <person name="Seeger K."/>
            <person name="Saunders D."/>
            <person name="Sharp S."/>
            <person name="Squares R."/>
            <person name="Squares S."/>
            <person name="Taylor K."/>
            <person name="Warren T."/>
            <person name="Wietzorrek A."/>
            <person name="Woodward J.R."/>
            <person name="Barrell B.G."/>
            <person name="Parkhill J."/>
            <person name="Hopwood D.A."/>
        </authorList>
    </citation>
    <scope>NUCLEOTIDE SEQUENCE [LARGE SCALE GENOMIC DNA]</scope>
    <source>
        <strain>ATCC BAA-471 / A3(2) / M145</strain>
    </source>
</reference>
<name>Y5602_STRCO</name>
<protein>
    <recommendedName>
        <fullName>UPF0102 protein SCO5602</fullName>
    </recommendedName>
</protein>
<dbReference type="EMBL" id="AL939124">
    <property type="protein sequence ID" value="CAA19394.1"/>
    <property type="molecule type" value="Genomic_DNA"/>
</dbReference>
<dbReference type="PIR" id="T34787">
    <property type="entry name" value="T34787"/>
</dbReference>
<dbReference type="RefSeq" id="NP_629736.1">
    <property type="nucleotide sequence ID" value="NC_003888.3"/>
</dbReference>
<dbReference type="SMR" id="O69890"/>
<dbReference type="FunCoup" id="O69890">
    <property type="interactions" value="18"/>
</dbReference>
<dbReference type="STRING" id="100226.gene:17763260"/>
<dbReference type="PaxDb" id="100226-SCO5602"/>
<dbReference type="KEGG" id="sco:SCO5602"/>
<dbReference type="PATRIC" id="fig|100226.15.peg.5694"/>
<dbReference type="eggNOG" id="COG0792">
    <property type="taxonomic scope" value="Bacteria"/>
</dbReference>
<dbReference type="HOGENOM" id="CLU_115353_2_3_11"/>
<dbReference type="InParanoid" id="O69890"/>
<dbReference type="OrthoDB" id="9794876at2"/>
<dbReference type="PhylomeDB" id="O69890"/>
<dbReference type="Proteomes" id="UP000001973">
    <property type="component" value="Chromosome"/>
</dbReference>
<dbReference type="GO" id="GO:0003676">
    <property type="term" value="F:nucleic acid binding"/>
    <property type="evidence" value="ECO:0007669"/>
    <property type="project" value="InterPro"/>
</dbReference>
<dbReference type="CDD" id="cd20736">
    <property type="entry name" value="PoNe_Nuclease"/>
    <property type="match status" value="1"/>
</dbReference>
<dbReference type="Gene3D" id="3.40.1350.10">
    <property type="match status" value="1"/>
</dbReference>
<dbReference type="HAMAP" id="MF_00048">
    <property type="entry name" value="UPF0102"/>
    <property type="match status" value="1"/>
</dbReference>
<dbReference type="InterPro" id="IPR011335">
    <property type="entry name" value="Restrct_endonuc-II-like"/>
</dbReference>
<dbReference type="InterPro" id="IPR011856">
    <property type="entry name" value="tRNA_endonuc-like_dom_sf"/>
</dbReference>
<dbReference type="InterPro" id="IPR003509">
    <property type="entry name" value="UPF0102_YraN-like"/>
</dbReference>
<dbReference type="NCBIfam" id="NF009154">
    <property type="entry name" value="PRK12497.3-3"/>
    <property type="match status" value="1"/>
</dbReference>
<dbReference type="PANTHER" id="PTHR34039">
    <property type="entry name" value="UPF0102 PROTEIN YRAN"/>
    <property type="match status" value="1"/>
</dbReference>
<dbReference type="PANTHER" id="PTHR34039:SF1">
    <property type="entry name" value="UPF0102 PROTEIN YRAN"/>
    <property type="match status" value="1"/>
</dbReference>
<dbReference type="Pfam" id="PF02021">
    <property type="entry name" value="UPF0102"/>
    <property type="match status" value="1"/>
</dbReference>
<dbReference type="SUPFAM" id="SSF52980">
    <property type="entry name" value="Restriction endonuclease-like"/>
    <property type="match status" value="1"/>
</dbReference>
<comment type="similarity">
    <text evidence="1">Belongs to the UPF0102 family.</text>
</comment>
<organism>
    <name type="scientific">Streptomyces coelicolor (strain ATCC BAA-471 / A3(2) / M145)</name>
    <dbReference type="NCBI Taxonomy" id="100226"/>
    <lineage>
        <taxon>Bacteria</taxon>
        <taxon>Bacillati</taxon>
        <taxon>Actinomycetota</taxon>
        <taxon>Actinomycetes</taxon>
        <taxon>Kitasatosporales</taxon>
        <taxon>Streptomycetaceae</taxon>
        <taxon>Streptomyces</taxon>
        <taxon>Streptomyces albidoflavus group</taxon>
    </lineage>
</organism>
<proteinExistence type="inferred from homology"/>
<sequence length="130" mass="13763">MIVGAGGGADMNARGAMGRYGETLAARRLTGAGMTVLERNWRCGRTGEIDIVARDGDVLVVCEVKTRRGGAFEHPMAAVTPDKAERLRRLAERWIQTHGGAPPGGVRIDLVGVLLPQRGAPVVEHARGVA</sequence>
<keyword id="KW-1185">Reference proteome</keyword>